<comment type="function">
    <text evidence="1">Specifically methylates position 2 of adenine 2503 in 23S rRNA and position 2 of adenine 37 in tRNAs.</text>
</comment>
<comment type="catalytic activity">
    <reaction evidence="1">
        <text>adenosine(2503) in 23S rRNA + 2 reduced [2Fe-2S]-[ferredoxin] + 2 S-adenosyl-L-methionine = 2-methyladenosine(2503) in 23S rRNA + 5'-deoxyadenosine + L-methionine + 2 oxidized [2Fe-2S]-[ferredoxin] + S-adenosyl-L-homocysteine</text>
        <dbReference type="Rhea" id="RHEA:42916"/>
        <dbReference type="Rhea" id="RHEA-COMP:10000"/>
        <dbReference type="Rhea" id="RHEA-COMP:10001"/>
        <dbReference type="Rhea" id="RHEA-COMP:10152"/>
        <dbReference type="Rhea" id="RHEA-COMP:10282"/>
        <dbReference type="ChEBI" id="CHEBI:17319"/>
        <dbReference type="ChEBI" id="CHEBI:33737"/>
        <dbReference type="ChEBI" id="CHEBI:33738"/>
        <dbReference type="ChEBI" id="CHEBI:57844"/>
        <dbReference type="ChEBI" id="CHEBI:57856"/>
        <dbReference type="ChEBI" id="CHEBI:59789"/>
        <dbReference type="ChEBI" id="CHEBI:74411"/>
        <dbReference type="ChEBI" id="CHEBI:74497"/>
        <dbReference type="EC" id="2.1.1.192"/>
    </reaction>
</comment>
<comment type="catalytic activity">
    <reaction evidence="1">
        <text>adenosine(37) in tRNA + 2 reduced [2Fe-2S]-[ferredoxin] + 2 S-adenosyl-L-methionine = 2-methyladenosine(37) in tRNA + 5'-deoxyadenosine + L-methionine + 2 oxidized [2Fe-2S]-[ferredoxin] + S-adenosyl-L-homocysteine</text>
        <dbReference type="Rhea" id="RHEA:43332"/>
        <dbReference type="Rhea" id="RHEA-COMP:10000"/>
        <dbReference type="Rhea" id="RHEA-COMP:10001"/>
        <dbReference type="Rhea" id="RHEA-COMP:10162"/>
        <dbReference type="Rhea" id="RHEA-COMP:10485"/>
        <dbReference type="ChEBI" id="CHEBI:17319"/>
        <dbReference type="ChEBI" id="CHEBI:33737"/>
        <dbReference type="ChEBI" id="CHEBI:33738"/>
        <dbReference type="ChEBI" id="CHEBI:57844"/>
        <dbReference type="ChEBI" id="CHEBI:57856"/>
        <dbReference type="ChEBI" id="CHEBI:59789"/>
        <dbReference type="ChEBI" id="CHEBI:74411"/>
        <dbReference type="ChEBI" id="CHEBI:74497"/>
        <dbReference type="EC" id="2.1.1.192"/>
    </reaction>
</comment>
<comment type="cofactor">
    <cofactor evidence="1">
        <name>[4Fe-4S] cluster</name>
        <dbReference type="ChEBI" id="CHEBI:49883"/>
    </cofactor>
    <text evidence="1">Binds 1 [4Fe-4S] cluster. The cluster is coordinated with 3 cysteines and an exchangeable S-adenosyl-L-methionine.</text>
</comment>
<comment type="subcellular location">
    <subcellularLocation>
        <location evidence="1">Cytoplasm</location>
    </subcellularLocation>
</comment>
<comment type="miscellaneous">
    <text evidence="1">Reaction proceeds by a ping-pong mechanism involving intermediate methylation of a conserved cysteine residue.</text>
</comment>
<comment type="similarity">
    <text evidence="1">Belongs to the radical SAM superfamily. RlmN family.</text>
</comment>
<gene>
    <name evidence="1" type="primary">rlmN</name>
    <name type="ordered locus">str1696</name>
</gene>
<reference key="1">
    <citation type="journal article" date="2004" name="Nat. Biotechnol.">
        <title>Complete sequence and comparative genome analysis of the dairy bacterium Streptococcus thermophilus.</title>
        <authorList>
            <person name="Bolotin A."/>
            <person name="Quinquis B."/>
            <person name="Renault P."/>
            <person name="Sorokin A."/>
            <person name="Ehrlich S.D."/>
            <person name="Kulakauskas S."/>
            <person name="Lapidus A."/>
            <person name="Goltsman E."/>
            <person name="Mazur M."/>
            <person name="Pusch G.D."/>
            <person name="Fonstein M."/>
            <person name="Overbeek R."/>
            <person name="Kyprides N."/>
            <person name="Purnelle B."/>
            <person name="Prozzi D."/>
            <person name="Ngui K."/>
            <person name="Masuy D."/>
            <person name="Hancy F."/>
            <person name="Burteau S."/>
            <person name="Boutry M."/>
            <person name="Delcour J."/>
            <person name="Goffeau A."/>
            <person name="Hols P."/>
        </authorList>
    </citation>
    <scope>NUCLEOTIDE SEQUENCE [LARGE SCALE GENOMIC DNA]</scope>
    <source>
        <strain>CNRZ 1066</strain>
    </source>
</reference>
<proteinExistence type="inferred from homology"/>
<keyword id="KW-0004">4Fe-4S</keyword>
<keyword id="KW-0963">Cytoplasm</keyword>
<keyword id="KW-1015">Disulfide bond</keyword>
<keyword id="KW-0408">Iron</keyword>
<keyword id="KW-0411">Iron-sulfur</keyword>
<keyword id="KW-0479">Metal-binding</keyword>
<keyword id="KW-0489">Methyltransferase</keyword>
<keyword id="KW-0698">rRNA processing</keyword>
<keyword id="KW-0949">S-adenosyl-L-methionine</keyword>
<keyword id="KW-0808">Transferase</keyword>
<keyword id="KW-0819">tRNA processing</keyword>
<name>RLMN_STRT1</name>
<evidence type="ECO:0000255" key="1">
    <source>
        <dbReference type="HAMAP-Rule" id="MF_01849"/>
    </source>
</evidence>
<evidence type="ECO:0000255" key="2">
    <source>
        <dbReference type="PROSITE-ProRule" id="PRU01266"/>
    </source>
</evidence>
<evidence type="ECO:0000256" key="3">
    <source>
        <dbReference type="SAM" id="MobiDB-lite"/>
    </source>
</evidence>
<dbReference type="EC" id="2.1.1.192" evidence="1"/>
<dbReference type="EMBL" id="CP000024">
    <property type="protein sequence ID" value="AAV63216.1"/>
    <property type="molecule type" value="Genomic_DNA"/>
</dbReference>
<dbReference type="RefSeq" id="WP_011227522.1">
    <property type="nucleotide sequence ID" value="NC_006449.1"/>
</dbReference>
<dbReference type="SMR" id="Q5LY98"/>
<dbReference type="KEGG" id="stc:str1696"/>
<dbReference type="HOGENOM" id="CLU_029101_0_1_9"/>
<dbReference type="GO" id="GO:0005737">
    <property type="term" value="C:cytoplasm"/>
    <property type="evidence" value="ECO:0007669"/>
    <property type="project" value="UniProtKB-SubCell"/>
</dbReference>
<dbReference type="GO" id="GO:0051539">
    <property type="term" value="F:4 iron, 4 sulfur cluster binding"/>
    <property type="evidence" value="ECO:0007669"/>
    <property type="project" value="UniProtKB-UniRule"/>
</dbReference>
<dbReference type="GO" id="GO:0046872">
    <property type="term" value="F:metal ion binding"/>
    <property type="evidence" value="ECO:0007669"/>
    <property type="project" value="UniProtKB-KW"/>
</dbReference>
<dbReference type="GO" id="GO:0070040">
    <property type="term" value="F:rRNA (adenine(2503)-C2-)-methyltransferase activity"/>
    <property type="evidence" value="ECO:0007669"/>
    <property type="project" value="UniProtKB-UniRule"/>
</dbReference>
<dbReference type="GO" id="GO:0019843">
    <property type="term" value="F:rRNA binding"/>
    <property type="evidence" value="ECO:0007669"/>
    <property type="project" value="UniProtKB-UniRule"/>
</dbReference>
<dbReference type="GO" id="GO:0002935">
    <property type="term" value="F:tRNA (adenine(37)-C2)-methyltransferase activity"/>
    <property type="evidence" value="ECO:0007669"/>
    <property type="project" value="UniProtKB-UniRule"/>
</dbReference>
<dbReference type="GO" id="GO:0000049">
    <property type="term" value="F:tRNA binding"/>
    <property type="evidence" value="ECO:0007669"/>
    <property type="project" value="UniProtKB-UniRule"/>
</dbReference>
<dbReference type="GO" id="GO:0070475">
    <property type="term" value="P:rRNA base methylation"/>
    <property type="evidence" value="ECO:0007669"/>
    <property type="project" value="UniProtKB-UniRule"/>
</dbReference>
<dbReference type="GO" id="GO:0030488">
    <property type="term" value="P:tRNA methylation"/>
    <property type="evidence" value="ECO:0007669"/>
    <property type="project" value="UniProtKB-UniRule"/>
</dbReference>
<dbReference type="CDD" id="cd01335">
    <property type="entry name" value="Radical_SAM"/>
    <property type="match status" value="1"/>
</dbReference>
<dbReference type="FunFam" id="3.20.20.70:FF:000014">
    <property type="entry name" value="Probable dual-specificity RNA methyltransferase RlmN"/>
    <property type="match status" value="1"/>
</dbReference>
<dbReference type="Gene3D" id="1.10.150.530">
    <property type="match status" value="1"/>
</dbReference>
<dbReference type="Gene3D" id="3.20.20.70">
    <property type="entry name" value="Aldolase class I"/>
    <property type="match status" value="1"/>
</dbReference>
<dbReference type="HAMAP" id="MF_01849">
    <property type="entry name" value="RNA_methyltr_RlmN"/>
    <property type="match status" value="1"/>
</dbReference>
<dbReference type="InterPro" id="IPR013785">
    <property type="entry name" value="Aldolase_TIM"/>
</dbReference>
<dbReference type="InterPro" id="IPR040072">
    <property type="entry name" value="Methyltransferase_A"/>
</dbReference>
<dbReference type="InterPro" id="IPR048641">
    <property type="entry name" value="RlmN_N"/>
</dbReference>
<dbReference type="InterPro" id="IPR027492">
    <property type="entry name" value="RNA_MTrfase_RlmN"/>
</dbReference>
<dbReference type="InterPro" id="IPR004383">
    <property type="entry name" value="rRNA_lsu_MTrfase_RlmN/Cfr"/>
</dbReference>
<dbReference type="InterPro" id="IPR007197">
    <property type="entry name" value="rSAM"/>
</dbReference>
<dbReference type="NCBIfam" id="TIGR00048">
    <property type="entry name" value="rRNA_mod_RlmN"/>
    <property type="match status" value="1"/>
</dbReference>
<dbReference type="PANTHER" id="PTHR30544">
    <property type="entry name" value="23S RRNA METHYLTRANSFERASE"/>
    <property type="match status" value="1"/>
</dbReference>
<dbReference type="PANTHER" id="PTHR30544:SF5">
    <property type="entry name" value="RADICAL SAM CORE DOMAIN-CONTAINING PROTEIN"/>
    <property type="match status" value="1"/>
</dbReference>
<dbReference type="Pfam" id="PF04055">
    <property type="entry name" value="Radical_SAM"/>
    <property type="match status" value="1"/>
</dbReference>
<dbReference type="Pfam" id="PF21016">
    <property type="entry name" value="RlmN_N"/>
    <property type="match status" value="1"/>
</dbReference>
<dbReference type="PIRSF" id="PIRSF006004">
    <property type="entry name" value="CHP00048"/>
    <property type="match status" value="1"/>
</dbReference>
<dbReference type="SFLD" id="SFLDF00275">
    <property type="entry name" value="adenosine_C2_methyltransferase"/>
    <property type="match status" value="1"/>
</dbReference>
<dbReference type="SFLD" id="SFLDS00029">
    <property type="entry name" value="Radical_SAM"/>
    <property type="match status" value="1"/>
</dbReference>
<dbReference type="SUPFAM" id="SSF102114">
    <property type="entry name" value="Radical SAM enzymes"/>
    <property type="match status" value="1"/>
</dbReference>
<dbReference type="PROSITE" id="PS51918">
    <property type="entry name" value="RADICAL_SAM"/>
    <property type="match status" value="1"/>
</dbReference>
<organism>
    <name type="scientific">Streptococcus thermophilus (strain CNRZ 1066)</name>
    <dbReference type="NCBI Taxonomy" id="299768"/>
    <lineage>
        <taxon>Bacteria</taxon>
        <taxon>Bacillati</taxon>
        <taxon>Bacillota</taxon>
        <taxon>Bacilli</taxon>
        <taxon>Lactobacillales</taxon>
        <taxon>Streptococcaceae</taxon>
        <taxon>Streptococcus</taxon>
    </lineage>
</organism>
<feature type="chain" id="PRO_0000350472" description="Probable dual-specificity RNA methyltransferase RlmN">
    <location>
        <begin position="1"/>
        <end position="389"/>
    </location>
</feature>
<feature type="domain" description="Radical SAM core" evidence="2">
    <location>
        <begin position="120"/>
        <end position="358"/>
    </location>
</feature>
<feature type="region of interest" description="Disordered" evidence="3">
    <location>
        <begin position="370"/>
        <end position="389"/>
    </location>
</feature>
<feature type="compositionally biased region" description="Basic and acidic residues" evidence="3">
    <location>
        <begin position="371"/>
        <end position="389"/>
    </location>
</feature>
<feature type="active site" description="Proton acceptor" evidence="1">
    <location>
        <position position="114"/>
    </location>
</feature>
<feature type="active site" description="S-methylcysteine intermediate" evidence="1">
    <location>
        <position position="363"/>
    </location>
</feature>
<feature type="binding site" evidence="1">
    <location>
        <position position="134"/>
    </location>
    <ligand>
        <name>[4Fe-4S] cluster</name>
        <dbReference type="ChEBI" id="CHEBI:49883"/>
        <note>4Fe-4S-S-AdoMet</note>
    </ligand>
</feature>
<feature type="binding site" evidence="1">
    <location>
        <position position="138"/>
    </location>
    <ligand>
        <name>[4Fe-4S] cluster</name>
        <dbReference type="ChEBI" id="CHEBI:49883"/>
        <note>4Fe-4S-S-AdoMet</note>
    </ligand>
</feature>
<feature type="binding site" evidence="1">
    <location>
        <position position="141"/>
    </location>
    <ligand>
        <name>[4Fe-4S] cluster</name>
        <dbReference type="ChEBI" id="CHEBI:49883"/>
        <note>4Fe-4S-S-AdoMet</note>
    </ligand>
</feature>
<feature type="binding site" evidence="1">
    <location>
        <begin position="186"/>
        <end position="187"/>
    </location>
    <ligand>
        <name>S-adenosyl-L-methionine</name>
        <dbReference type="ChEBI" id="CHEBI:59789"/>
    </ligand>
</feature>
<feature type="binding site" evidence="1">
    <location>
        <position position="218"/>
    </location>
    <ligand>
        <name>S-adenosyl-L-methionine</name>
        <dbReference type="ChEBI" id="CHEBI:59789"/>
    </ligand>
</feature>
<feature type="binding site" evidence="1">
    <location>
        <begin position="241"/>
        <end position="243"/>
    </location>
    <ligand>
        <name>S-adenosyl-L-methionine</name>
        <dbReference type="ChEBI" id="CHEBI:59789"/>
    </ligand>
</feature>
<feature type="binding site" evidence="1">
    <location>
        <position position="319"/>
    </location>
    <ligand>
        <name>S-adenosyl-L-methionine</name>
        <dbReference type="ChEBI" id="CHEBI:59789"/>
    </ligand>
</feature>
<feature type="disulfide bond" description="(transient)" evidence="1">
    <location>
        <begin position="127"/>
        <end position="363"/>
    </location>
</feature>
<sequence>MSEVTTQSKPERRKRQKLEDMEGYKPSIYGLTRDELIDWAVEHGEKKFRATQIWDWLYKKRVQSFEEMTNISKDFIAKLNDNFCVNPLKQRIVQESKDGTVKYLFELPDGMLIETVLMRQHYGLSVCVTTQVGCNIGCTFCASGLIKKQRDLTAGEIVAQIMLVQKYFDDRGDGERVSHVVVMGIGEPFDNYDNVLRFLRTINNDNGLAIGARHITVSTSGLAPKIKEFANEGVQVNLAVSLHAPNNDLRSSIMRINRSFPLEKLFEAIEYYIQTTNRRVTFEYIMLNEVNDHPENAQELADLTKKIRKLSYINLIPYNPVSEHDHYSRSTKERVAAFYDVLKKNGVNCVVRQEHGTDIDAACGQLRSNTMKRDRQKAVAEASGKSEGK</sequence>
<accession>Q5LY98</accession>
<protein>
    <recommendedName>
        <fullName evidence="1">Probable dual-specificity RNA methyltransferase RlmN</fullName>
        <ecNumber evidence="1">2.1.1.192</ecNumber>
    </recommendedName>
    <alternativeName>
        <fullName evidence="1">23S rRNA (adenine(2503)-C(2))-methyltransferase</fullName>
    </alternativeName>
    <alternativeName>
        <fullName evidence="1">23S rRNA m2A2503 methyltransferase</fullName>
    </alternativeName>
    <alternativeName>
        <fullName evidence="1">Ribosomal RNA large subunit methyltransferase N</fullName>
    </alternativeName>
    <alternativeName>
        <fullName evidence="1">tRNA (adenine(37)-C(2))-methyltransferase</fullName>
    </alternativeName>
    <alternativeName>
        <fullName evidence="1">tRNA m2A37 methyltransferase</fullName>
    </alternativeName>
</protein>